<dbReference type="EC" id="2.1.1.74" evidence="1"/>
<dbReference type="EMBL" id="CP000362">
    <property type="protein sequence ID" value="ABG32160.1"/>
    <property type="molecule type" value="Genomic_DNA"/>
</dbReference>
<dbReference type="RefSeq" id="WP_011568777.1">
    <property type="nucleotide sequence ID" value="NC_008209.1"/>
</dbReference>
<dbReference type="SMR" id="Q166D3"/>
<dbReference type="STRING" id="375451.RD1_2610"/>
<dbReference type="KEGG" id="rde:RD1_2610"/>
<dbReference type="eggNOG" id="COG1206">
    <property type="taxonomic scope" value="Bacteria"/>
</dbReference>
<dbReference type="HOGENOM" id="CLU_033057_1_0_5"/>
<dbReference type="OrthoDB" id="9803114at2"/>
<dbReference type="Proteomes" id="UP000007029">
    <property type="component" value="Chromosome"/>
</dbReference>
<dbReference type="GO" id="GO:0005829">
    <property type="term" value="C:cytosol"/>
    <property type="evidence" value="ECO:0007669"/>
    <property type="project" value="TreeGrafter"/>
</dbReference>
<dbReference type="GO" id="GO:0050660">
    <property type="term" value="F:flavin adenine dinucleotide binding"/>
    <property type="evidence" value="ECO:0007669"/>
    <property type="project" value="UniProtKB-UniRule"/>
</dbReference>
<dbReference type="GO" id="GO:0047151">
    <property type="term" value="F:tRNA (uracil(54)-C5)-methyltransferase activity, 5,10-methylenetetrahydrofolate-dependent"/>
    <property type="evidence" value="ECO:0007669"/>
    <property type="project" value="UniProtKB-UniRule"/>
</dbReference>
<dbReference type="GO" id="GO:0030488">
    <property type="term" value="P:tRNA methylation"/>
    <property type="evidence" value="ECO:0007669"/>
    <property type="project" value="TreeGrafter"/>
</dbReference>
<dbReference type="GO" id="GO:0002098">
    <property type="term" value="P:tRNA wobble uridine modification"/>
    <property type="evidence" value="ECO:0007669"/>
    <property type="project" value="TreeGrafter"/>
</dbReference>
<dbReference type="Gene3D" id="3.50.50.60">
    <property type="entry name" value="FAD/NAD(P)-binding domain"/>
    <property type="match status" value="2"/>
</dbReference>
<dbReference type="HAMAP" id="MF_01037">
    <property type="entry name" value="TrmFO"/>
    <property type="match status" value="1"/>
</dbReference>
<dbReference type="InterPro" id="IPR036188">
    <property type="entry name" value="FAD/NAD-bd_sf"/>
</dbReference>
<dbReference type="InterPro" id="IPR002218">
    <property type="entry name" value="MnmG-rel"/>
</dbReference>
<dbReference type="InterPro" id="IPR040131">
    <property type="entry name" value="MnmG_N"/>
</dbReference>
<dbReference type="InterPro" id="IPR004417">
    <property type="entry name" value="TrmFO"/>
</dbReference>
<dbReference type="NCBIfam" id="TIGR00137">
    <property type="entry name" value="gid_trmFO"/>
    <property type="match status" value="1"/>
</dbReference>
<dbReference type="NCBIfam" id="NF003739">
    <property type="entry name" value="PRK05335.1"/>
    <property type="match status" value="1"/>
</dbReference>
<dbReference type="PANTHER" id="PTHR11806">
    <property type="entry name" value="GLUCOSE INHIBITED DIVISION PROTEIN A"/>
    <property type="match status" value="1"/>
</dbReference>
<dbReference type="PANTHER" id="PTHR11806:SF2">
    <property type="entry name" value="METHYLENETETRAHYDROFOLATE--TRNA-(URACIL-5-)-METHYLTRANSFERASE TRMFO"/>
    <property type="match status" value="1"/>
</dbReference>
<dbReference type="Pfam" id="PF01134">
    <property type="entry name" value="GIDA"/>
    <property type="match status" value="1"/>
</dbReference>
<dbReference type="SUPFAM" id="SSF51905">
    <property type="entry name" value="FAD/NAD(P)-binding domain"/>
    <property type="match status" value="1"/>
</dbReference>
<protein>
    <recommendedName>
        <fullName evidence="1">Methylenetetrahydrofolate--tRNA-(uracil-5-)-methyltransferase TrmFO</fullName>
        <ecNumber evidence="1">2.1.1.74</ecNumber>
    </recommendedName>
    <alternativeName>
        <fullName evidence="1">Folate-dependent tRNA (uracil-5-)-methyltransferase</fullName>
    </alternativeName>
    <alternativeName>
        <fullName evidence="1">Folate-dependent tRNA(M-5-U54)-methyltransferase</fullName>
    </alternativeName>
</protein>
<evidence type="ECO:0000255" key="1">
    <source>
        <dbReference type="HAMAP-Rule" id="MF_01037"/>
    </source>
</evidence>
<sequence length="450" mass="49029">MTQTLHIVGGGMAGSEAAWQAAEMGVDVVLHEMRPKVGTFAHQTGLLGEMVCSNSFRSDDDEQNAVGLLHWEMRAAGGLIMRMADKHRLPAGGALAVDRDLFAQSVTDTLTAHPRITIEYGEISELPASGQWIFATGPLTSSKLSDAIAAQTGGAALAFFDAIAPIVYFDSIDMSRAWMQSRYDKGETEEERTAYLNCPMDKDQYEAFIDALLAADKTEFKEGETADYFDGCLPIEVMAERGRETLRFGPMKPVGLTNPHQPDVKPYAVVQLRRDNKLGTLYNIVGFQTKMKYGAQAAVFKTIPGLENASFARLGGIHRNTFLNAPTLLDEQMRLRSRPNIRFAGQITGVEGYVESAAMGLLAGRLAAAEILGISLSAPADTTATGALITHISGGAEAKTFQPMNVNFGLFPPVEGLKGGRRGRKDRYKAYTDRAKRDWQNWLEAVKEPA</sequence>
<keyword id="KW-0963">Cytoplasm</keyword>
<keyword id="KW-0274">FAD</keyword>
<keyword id="KW-0285">Flavoprotein</keyword>
<keyword id="KW-0489">Methyltransferase</keyword>
<keyword id="KW-0520">NAD</keyword>
<keyword id="KW-0521">NADP</keyword>
<keyword id="KW-1185">Reference proteome</keyword>
<keyword id="KW-0808">Transferase</keyword>
<keyword id="KW-0819">tRNA processing</keyword>
<organism>
    <name type="scientific">Roseobacter denitrificans (strain ATCC 33942 / OCh 114)</name>
    <name type="common">Erythrobacter sp. (strain OCh 114)</name>
    <name type="synonym">Roseobacter denitrificans</name>
    <dbReference type="NCBI Taxonomy" id="375451"/>
    <lineage>
        <taxon>Bacteria</taxon>
        <taxon>Pseudomonadati</taxon>
        <taxon>Pseudomonadota</taxon>
        <taxon>Alphaproteobacteria</taxon>
        <taxon>Rhodobacterales</taxon>
        <taxon>Roseobacteraceae</taxon>
        <taxon>Roseobacter</taxon>
    </lineage>
</organism>
<comment type="function">
    <text evidence="1">Catalyzes the folate-dependent formation of 5-methyl-uridine at position 54 (M-5-U54) in all tRNAs.</text>
</comment>
<comment type="catalytic activity">
    <reaction evidence="1">
        <text>uridine(54) in tRNA + (6R)-5,10-methylene-5,6,7,8-tetrahydrofolate + NADH + H(+) = 5-methyluridine(54) in tRNA + (6S)-5,6,7,8-tetrahydrofolate + NAD(+)</text>
        <dbReference type="Rhea" id="RHEA:16873"/>
        <dbReference type="Rhea" id="RHEA-COMP:10167"/>
        <dbReference type="Rhea" id="RHEA-COMP:10193"/>
        <dbReference type="ChEBI" id="CHEBI:15378"/>
        <dbReference type="ChEBI" id="CHEBI:15636"/>
        <dbReference type="ChEBI" id="CHEBI:57453"/>
        <dbReference type="ChEBI" id="CHEBI:57540"/>
        <dbReference type="ChEBI" id="CHEBI:57945"/>
        <dbReference type="ChEBI" id="CHEBI:65315"/>
        <dbReference type="ChEBI" id="CHEBI:74447"/>
        <dbReference type="EC" id="2.1.1.74"/>
    </reaction>
</comment>
<comment type="catalytic activity">
    <reaction evidence="1">
        <text>uridine(54) in tRNA + (6R)-5,10-methylene-5,6,7,8-tetrahydrofolate + NADPH + H(+) = 5-methyluridine(54) in tRNA + (6S)-5,6,7,8-tetrahydrofolate + NADP(+)</text>
        <dbReference type="Rhea" id="RHEA:62372"/>
        <dbReference type="Rhea" id="RHEA-COMP:10167"/>
        <dbReference type="Rhea" id="RHEA-COMP:10193"/>
        <dbReference type="ChEBI" id="CHEBI:15378"/>
        <dbReference type="ChEBI" id="CHEBI:15636"/>
        <dbReference type="ChEBI" id="CHEBI:57453"/>
        <dbReference type="ChEBI" id="CHEBI:57783"/>
        <dbReference type="ChEBI" id="CHEBI:58349"/>
        <dbReference type="ChEBI" id="CHEBI:65315"/>
        <dbReference type="ChEBI" id="CHEBI:74447"/>
        <dbReference type="EC" id="2.1.1.74"/>
    </reaction>
</comment>
<comment type="cofactor">
    <cofactor evidence="1">
        <name>FAD</name>
        <dbReference type="ChEBI" id="CHEBI:57692"/>
    </cofactor>
</comment>
<comment type="subcellular location">
    <subcellularLocation>
        <location evidence="1">Cytoplasm</location>
    </subcellularLocation>
</comment>
<comment type="similarity">
    <text evidence="1">Belongs to the MnmG family. TrmFO subfamily.</text>
</comment>
<reference key="1">
    <citation type="journal article" date="2007" name="J. Bacteriol.">
        <title>The complete genome sequence of Roseobacter denitrificans reveals a mixotrophic rather than photosynthetic metabolism.</title>
        <authorList>
            <person name="Swingley W.D."/>
            <person name="Sadekar S."/>
            <person name="Mastrian S.D."/>
            <person name="Matthies H.J."/>
            <person name="Hao J."/>
            <person name="Ramos H."/>
            <person name="Acharya C.R."/>
            <person name="Conrad A.L."/>
            <person name="Taylor H.L."/>
            <person name="Dejesa L.C."/>
            <person name="Shah M.K."/>
            <person name="O'Huallachain M.E."/>
            <person name="Lince M.T."/>
            <person name="Blankenship R.E."/>
            <person name="Beatty J.T."/>
            <person name="Touchman J.W."/>
        </authorList>
    </citation>
    <scope>NUCLEOTIDE SEQUENCE [LARGE SCALE GENOMIC DNA]</scope>
    <source>
        <strain>ATCC 33942 / OCh 114</strain>
    </source>
</reference>
<proteinExistence type="inferred from homology"/>
<feature type="chain" id="PRO_0000346391" description="Methylenetetrahydrofolate--tRNA-(uracil-5-)-methyltransferase TrmFO">
    <location>
        <begin position="1"/>
        <end position="450"/>
    </location>
</feature>
<feature type="binding site" evidence="1">
    <location>
        <begin position="9"/>
        <end position="14"/>
    </location>
    <ligand>
        <name>FAD</name>
        <dbReference type="ChEBI" id="CHEBI:57692"/>
    </ligand>
</feature>
<accession>Q166D3</accession>
<name>TRMFO_ROSDO</name>
<gene>
    <name evidence="1" type="primary">trmFO</name>
    <name type="ordered locus">RD1_2610</name>
</gene>